<protein>
    <recommendedName>
        <fullName evidence="1">Elongation factor P</fullName>
        <shortName evidence="1">EF-P</shortName>
    </recommendedName>
</protein>
<proteinExistence type="inferred from homology"/>
<evidence type="ECO:0000255" key="1">
    <source>
        <dbReference type="HAMAP-Rule" id="MF_00141"/>
    </source>
</evidence>
<organism>
    <name type="scientific">Xylella fastidiosa (strain Temecula1 / ATCC 700964)</name>
    <dbReference type="NCBI Taxonomy" id="183190"/>
    <lineage>
        <taxon>Bacteria</taxon>
        <taxon>Pseudomonadati</taxon>
        <taxon>Pseudomonadota</taxon>
        <taxon>Gammaproteobacteria</taxon>
        <taxon>Lysobacterales</taxon>
        <taxon>Lysobacteraceae</taxon>
        <taxon>Xylella</taxon>
    </lineage>
</organism>
<accession>P64045</accession>
<accession>Q9PAM3</accession>
<gene>
    <name evidence="1" type="primary">efp</name>
    <name type="ordered locus">PD_1490</name>
</gene>
<comment type="function">
    <text evidence="1">Involved in peptide bond synthesis. Alleviates ribosome stalling that occurs when 3 or more consecutive Pro residues or the sequence PPG is present in a protein, possibly by augmenting the peptidyl transferase activity of the ribosome. Modification of Lys-34 is required for alleviation.</text>
</comment>
<comment type="pathway">
    <text evidence="1">Protein biosynthesis; polypeptide chain elongation.</text>
</comment>
<comment type="subcellular location">
    <subcellularLocation>
        <location evidence="1">Cytoplasm</location>
    </subcellularLocation>
</comment>
<comment type="PTM">
    <text evidence="1">May be beta-lysylated on the epsilon-amino group of Lys-34 by the combined action of EpmA and EpmB, and then hydroxylated on the C5 position of the same residue by EpmC (if this protein is present). Lysylation is critical for the stimulatory effect of EF-P on peptide-bond formation. The lysylation moiety may extend toward the peptidyltransferase center and stabilize the terminal 3-CCA end of the tRNA. Hydroxylation of the C5 position on Lys-34 may allow additional potential stabilizing hydrogen-bond interactions with the P-tRNA.</text>
</comment>
<comment type="similarity">
    <text evidence="1">Belongs to the elongation factor P family.</text>
</comment>
<reference key="1">
    <citation type="journal article" date="2003" name="J. Bacteriol.">
        <title>Comparative analyses of the complete genome sequences of Pierce's disease and citrus variegated chlorosis strains of Xylella fastidiosa.</title>
        <authorList>
            <person name="Van Sluys M.A."/>
            <person name="de Oliveira M.C."/>
            <person name="Monteiro-Vitorello C.B."/>
            <person name="Miyaki C.Y."/>
            <person name="Furlan L.R."/>
            <person name="Camargo L.E.A."/>
            <person name="da Silva A.C.R."/>
            <person name="Moon D.H."/>
            <person name="Takita M.A."/>
            <person name="Lemos E.G.M."/>
            <person name="Machado M.A."/>
            <person name="Ferro M.I.T."/>
            <person name="da Silva F.R."/>
            <person name="Goldman M.H.S."/>
            <person name="Goldman G.H."/>
            <person name="Lemos M.V.F."/>
            <person name="El-Dorry H."/>
            <person name="Tsai S.M."/>
            <person name="Carrer H."/>
            <person name="Carraro D.M."/>
            <person name="de Oliveira R.C."/>
            <person name="Nunes L.R."/>
            <person name="Siqueira W.J."/>
            <person name="Coutinho L.L."/>
            <person name="Kimura E.T."/>
            <person name="Ferro E.S."/>
            <person name="Harakava R."/>
            <person name="Kuramae E.E."/>
            <person name="Marino C.L."/>
            <person name="Giglioti E."/>
            <person name="Abreu I.L."/>
            <person name="Alves L.M.C."/>
            <person name="do Amaral A.M."/>
            <person name="Baia G.S."/>
            <person name="Blanco S.R."/>
            <person name="Brito M.S."/>
            <person name="Cannavan F.S."/>
            <person name="Celestino A.V."/>
            <person name="da Cunha A.F."/>
            <person name="Fenille R.C."/>
            <person name="Ferro J.A."/>
            <person name="Formighieri E.F."/>
            <person name="Kishi L.T."/>
            <person name="Leoni S.G."/>
            <person name="Oliveira A.R."/>
            <person name="Rosa V.E. Jr."/>
            <person name="Sassaki F.T."/>
            <person name="Sena J.A.D."/>
            <person name="de Souza A.A."/>
            <person name="Truffi D."/>
            <person name="Tsukumo F."/>
            <person name="Yanai G.M."/>
            <person name="Zaros L.G."/>
            <person name="Civerolo E.L."/>
            <person name="Simpson A.J.G."/>
            <person name="Almeida N.F. Jr."/>
            <person name="Setubal J.C."/>
            <person name="Kitajima J.P."/>
        </authorList>
    </citation>
    <scope>NUCLEOTIDE SEQUENCE [LARGE SCALE GENOMIC DNA]</scope>
    <source>
        <strain>Temecula1 / ATCC 700964</strain>
    </source>
</reference>
<dbReference type="EMBL" id="AE009442">
    <property type="protein sequence ID" value="AAO29334.1"/>
    <property type="molecule type" value="Genomic_DNA"/>
</dbReference>
<dbReference type="RefSeq" id="WP_004086027.1">
    <property type="nucleotide sequence ID" value="NC_004556.1"/>
</dbReference>
<dbReference type="SMR" id="P64045"/>
<dbReference type="GeneID" id="93905313"/>
<dbReference type="KEGG" id="xft:PD_1490"/>
<dbReference type="HOGENOM" id="CLU_074944_0_0_6"/>
<dbReference type="UniPathway" id="UPA00345"/>
<dbReference type="Proteomes" id="UP000002516">
    <property type="component" value="Chromosome"/>
</dbReference>
<dbReference type="GO" id="GO:0005737">
    <property type="term" value="C:cytoplasm"/>
    <property type="evidence" value="ECO:0007669"/>
    <property type="project" value="UniProtKB-SubCell"/>
</dbReference>
<dbReference type="GO" id="GO:0003746">
    <property type="term" value="F:translation elongation factor activity"/>
    <property type="evidence" value="ECO:0007669"/>
    <property type="project" value="UniProtKB-UniRule"/>
</dbReference>
<dbReference type="GO" id="GO:0043043">
    <property type="term" value="P:peptide biosynthetic process"/>
    <property type="evidence" value="ECO:0007669"/>
    <property type="project" value="InterPro"/>
</dbReference>
<dbReference type="CDD" id="cd04470">
    <property type="entry name" value="S1_EF-P_repeat_1"/>
    <property type="match status" value="1"/>
</dbReference>
<dbReference type="CDD" id="cd05794">
    <property type="entry name" value="S1_EF-P_repeat_2"/>
    <property type="match status" value="1"/>
</dbReference>
<dbReference type="FunFam" id="2.30.30.30:FF:000003">
    <property type="entry name" value="Elongation factor P"/>
    <property type="match status" value="1"/>
</dbReference>
<dbReference type="FunFam" id="2.40.50.140:FF:000004">
    <property type="entry name" value="Elongation factor P"/>
    <property type="match status" value="1"/>
</dbReference>
<dbReference type="FunFam" id="2.40.50.140:FF:000009">
    <property type="entry name" value="Elongation factor P"/>
    <property type="match status" value="1"/>
</dbReference>
<dbReference type="Gene3D" id="2.30.30.30">
    <property type="match status" value="1"/>
</dbReference>
<dbReference type="Gene3D" id="2.40.50.140">
    <property type="entry name" value="Nucleic acid-binding proteins"/>
    <property type="match status" value="2"/>
</dbReference>
<dbReference type="HAMAP" id="MF_00141">
    <property type="entry name" value="EF_P"/>
    <property type="match status" value="1"/>
</dbReference>
<dbReference type="InterPro" id="IPR015365">
    <property type="entry name" value="Elong-fact-P_C"/>
</dbReference>
<dbReference type="InterPro" id="IPR012340">
    <property type="entry name" value="NA-bd_OB-fold"/>
</dbReference>
<dbReference type="InterPro" id="IPR014722">
    <property type="entry name" value="Rib_uL2_dom2"/>
</dbReference>
<dbReference type="InterPro" id="IPR020599">
    <property type="entry name" value="Transl_elong_fac_P/YeiP"/>
</dbReference>
<dbReference type="InterPro" id="IPR013185">
    <property type="entry name" value="Transl_elong_KOW-like"/>
</dbReference>
<dbReference type="InterPro" id="IPR001059">
    <property type="entry name" value="Transl_elong_P/YeiP_cen"/>
</dbReference>
<dbReference type="InterPro" id="IPR013852">
    <property type="entry name" value="Transl_elong_P/YeiP_CS"/>
</dbReference>
<dbReference type="InterPro" id="IPR011768">
    <property type="entry name" value="Transl_elongation_fac_P"/>
</dbReference>
<dbReference type="InterPro" id="IPR008991">
    <property type="entry name" value="Translation_prot_SH3-like_sf"/>
</dbReference>
<dbReference type="NCBIfam" id="TIGR00038">
    <property type="entry name" value="efp"/>
    <property type="match status" value="1"/>
</dbReference>
<dbReference type="NCBIfam" id="NF001810">
    <property type="entry name" value="PRK00529.1"/>
    <property type="match status" value="1"/>
</dbReference>
<dbReference type="PANTHER" id="PTHR30053">
    <property type="entry name" value="ELONGATION FACTOR P"/>
    <property type="match status" value="1"/>
</dbReference>
<dbReference type="PANTHER" id="PTHR30053:SF12">
    <property type="entry name" value="ELONGATION FACTOR P (EF-P) FAMILY PROTEIN"/>
    <property type="match status" value="1"/>
</dbReference>
<dbReference type="Pfam" id="PF01132">
    <property type="entry name" value="EFP"/>
    <property type="match status" value="1"/>
</dbReference>
<dbReference type="Pfam" id="PF08207">
    <property type="entry name" value="EFP_N"/>
    <property type="match status" value="1"/>
</dbReference>
<dbReference type="Pfam" id="PF09285">
    <property type="entry name" value="Elong-fact-P_C"/>
    <property type="match status" value="1"/>
</dbReference>
<dbReference type="PIRSF" id="PIRSF005901">
    <property type="entry name" value="EF-P"/>
    <property type="match status" value="1"/>
</dbReference>
<dbReference type="SMART" id="SM01185">
    <property type="entry name" value="EFP"/>
    <property type="match status" value="1"/>
</dbReference>
<dbReference type="SMART" id="SM00841">
    <property type="entry name" value="Elong-fact-P_C"/>
    <property type="match status" value="1"/>
</dbReference>
<dbReference type="SUPFAM" id="SSF50249">
    <property type="entry name" value="Nucleic acid-binding proteins"/>
    <property type="match status" value="2"/>
</dbReference>
<dbReference type="SUPFAM" id="SSF50104">
    <property type="entry name" value="Translation proteins SH3-like domain"/>
    <property type="match status" value="1"/>
</dbReference>
<dbReference type="PROSITE" id="PS01275">
    <property type="entry name" value="EFP"/>
    <property type="match status" value="1"/>
</dbReference>
<keyword id="KW-0963">Cytoplasm</keyword>
<keyword id="KW-0251">Elongation factor</keyword>
<keyword id="KW-0379">Hydroxylation</keyword>
<keyword id="KW-0648">Protein biosynthesis</keyword>
<keyword id="KW-1185">Reference proteome</keyword>
<sequence length="188" mass="20744">MASYGMNDVKNGMKILVNAEPAVITDTEYVKPGKGQAFTRVKYRLIKSGRVQEVTMKSTDTLEAADVVDTDMQYLYSDGEYWHFMQQETFEQVQADKNGMGGAEKWLKGEEQCVVTLWNGVPIGVQPPNFVELKITETDPGLRGDTSGGGGKPATLETGAVVRVPLFVNQDEVIKVDTRSGEYVSRVK</sequence>
<feature type="chain" id="PRO_0000094375" description="Elongation factor P">
    <location>
        <begin position="1"/>
        <end position="188"/>
    </location>
</feature>
<feature type="modified residue" description="N6-(3,6-diaminohexanoyl)-5-hydroxylysine" evidence="1">
    <location>
        <position position="34"/>
    </location>
</feature>
<name>EFP_XYLFT</name>